<name>GET1_ARTOC</name>
<feature type="chain" id="PRO_0000388601" description="Protein GET1">
    <location>
        <begin position="1"/>
        <end position="212"/>
    </location>
</feature>
<feature type="topological domain" description="Lumenal" evidence="1">
    <location>
        <begin position="1"/>
        <end position="4"/>
    </location>
</feature>
<feature type="transmembrane region" description="Helical" evidence="1">
    <location>
        <begin position="5"/>
        <end position="24"/>
    </location>
</feature>
<feature type="topological domain" description="Cytoplasmic" evidence="1">
    <location>
        <begin position="25"/>
        <end position="110"/>
    </location>
</feature>
<feature type="transmembrane region" description="Helical" evidence="1">
    <location>
        <begin position="111"/>
        <end position="131"/>
    </location>
</feature>
<feature type="topological domain" description="Lumenal" evidence="1">
    <location>
        <begin position="132"/>
        <end position="155"/>
    </location>
</feature>
<feature type="transmembrane region" description="Helical" evidence="1">
    <location>
        <begin position="156"/>
        <end position="172"/>
    </location>
</feature>
<feature type="topological domain" description="Cytoplasmic" evidence="1">
    <location>
        <begin position="173"/>
        <end position="212"/>
    </location>
</feature>
<feature type="region of interest" description="Disordered" evidence="2">
    <location>
        <begin position="189"/>
        <end position="212"/>
    </location>
</feature>
<feature type="coiled-coil region" evidence="1">
    <location>
        <begin position="75"/>
        <end position="99"/>
    </location>
</feature>
<feature type="compositionally biased region" description="Basic and acidic residues" evidence="2">
    <location>
        <begin position="201"/>
        <end position="212"/>
    </location>
</feature>
<evidence type="ECO:0000255" key="1">
    <source>
        <dbReference type="HAMAP-Rule" id="MF_03113"/>
    </source>
</evidence>
<evidence type="ECO:0000256" key="2">
    <source>
        <dbReference type="SAM" id="MobiDB-lite"/>
    </source>
</evidence>
<comment type="function">
    <text evidence="1">Required for the post-translational delivery of tail-anchored (TA) proteins to the endoplasmic reticulum. Acts as a membrane receptor for soluble GET3, which recognizes and selectively binds the transmembrane domain of TA proteins in the cytosol.</text>
</comment>
<comment type="subunit">
    <text evidence="1">Interacts with GET3.</text>
</comment>
<comment type="subcellular location">
    <subcellularLocation>
        <location evidence="1">Endoplasmic reticulum membrane</location>
        <topology evidence="1">Multi-pass membrane protein</topology>
    </subcellularLocation>
</comment>
<comment type="similarity">
    <text evidence="1">Belongs to the WRB/GET1 family.</text>
</comment>
<protein>
    <recommendedName>
        <fullName evidence="1">Protein GET1</fullName>
    </recommendedName>
    <alternativeName>
        <fullName evidence="1">Guided entry of tail-anchored proteins 1</fullName>
    </alternativeName>
</protein>
<gene>
    <name evidence="1" type="primary">GET1</name>
    <name type="ORF">MCYG_01229</name>
</gene>
<sequence length="212" mass="24022">MASLLLFVLVIQIITYLINTIGARTIDSLLWLLYIKLPNQASQVAREQRHAKLEVIRLKREMSATSSQDEFAKWAKLRRRHDKAMEEYDVKNKKLSALKTSFDWTIKTVRWVSTTGVTVILQFWFSKSPIFDLPRGWLPWQVEWILSFPRAPLGTVSIQVWGGACGTVIALVGGAMGVAAPAFKKINQPRGEAQKMGTPRGSREQTPVRKTQ</sequence>
<dbReference type="EMBL" id="DS995701">
    <property type="protein sequence ID" value="EEQ28341.1"/>
    <property type="molecule type" value="Genomic_DNA"/>
</dbReference>
<dbReference type="RefSeq" id="XP_002851125.1">
    <property type="nucleotide sequence ID" value="XM_002851079.1"/>
</dbReference>
<dbReference type="SMR" id="C5FEL7"/>
<dbReference type="STRING" id="554155.C5FEL7"/>
<dbReference type="GeneID" id="9228666"/>
<dbReference type="VEuPathDB" id="FungiDB:MCYG_01229"/>
<dbReference type="eggNOG" id="KOG4253">
    <property type="taxonomic scope" value="Eukaryota"/>
</dbReference>
<dbReference type="HOGENOM" id="CLU_089418_1_0_1"/>
<dbReference type="OMA" id="AEWIISF"/>
<dbReference type="OrthoDB" id="69461at2759"/>
<dbReference type="Proteomes" id="UP000002035">
    <property type="component" value="Unassembled WGS sequence"/>
</dbReference>
<dbReference type="GO" id="GO:0005789">
    <property type="term" value="C:endoplasmic reticulum membrane"/>
    <property type="evidence" value="ECO:0007669"/>
    <property type="project" value="UniProtKB-SubCell"/>
</dbReference>
<dbReference type="GO" id="GO:0043529">
    <property type="term" value="C:GET complex"/>
    <property type="evidence" value="ECO:0007669"/>
    <property type="project" value="InterPro"/>
</dbReference>
<dbReference type="GO" id="GO:0043495">
    <property type="term" value="F:protein-membrane adaptor activity"/>
    <property type="evidence" value="ECO:0007669"/>
    <property type="project" value="TreeGrafter"/>
</dbReference>
<dbReference type="GO" id="GO:0071816">
    <property type="term" value="P:tail-anchored membrane protein insertion into ER membrane"/>
    <property type="evidence" value="ECO:0007669"/>
    <property type="project" value="InterPro"/>
</dbReference>
<dbReference type="FunFam" id="1.10.287.660:FF:000006">
    <property type="entry name" value="Protein GET1"/>
    <property type="match status" value="1"/>
</dbReference>
<dbReference type="Gene3D" id="1.10.287.660">
    <property type="entry name" value="Helix hairpin bin"/>
    <property type="match status" value="1"/>
</dbReference>
<dbReference type="HAMAP" id="MF_03113">
    <property type="entry name" value="Get1"/>
    <property type="match status" value="1"/>
</dbReference>
<dbReference type="InterPro" id="IPR028945">
    <property type="entry name" value="Get1"/>
</dbReference>
<dbReference type="InterPro" id="IPR027538">
    <property type="entry name" value="Get1_fungi"/>
</dbReference>
<dbReference type="InterPro" id="IPR029012">
    <property type="entry name" value="Helix_hairpin_bin_sf"/>
</dbReference>
<dbReference type="PANTHER" id="PTHR42650:SF1">
    <property type="entry name" value="GUIDED ENTRY OF TAIL-ANCHORED PROTEINS FACTOR 1"/>
    <property type="match status" value="1"/>
</dbReference>
<dbReference type="PANTHER" id="PTHR42650">
    <property type="entry name" value="TAIL-ANCHORED PROTEIN INSERTION RECEPTOR WRB"/>
    <property type="match status" value="1"/>
</dbReference>
<dbReference type="Pfam" id="PF04420">
    <property type="entry name" value="CHD5"/>
    <property type="match status" value="1"/>
</dbReference>
<keyword id="KW-0175">Coiled coil</keyword>
<keyword id="KW-0256">Endoplasmic reticulum</keyword>
<keyword id="KW-0472">Membrane</keyword>
<keyword id="KW-1185">Reference proteome</keyword>
<keyword id="KW-0812">Transmembrane</keyword>
<keyword id="KW-1133">Transmembrane helix</keyword>
<keyword id="KW-0813">Transport</keyword>
<reference key="1">
    <citation type="journal article" date="2012" name="MBio">
        <title>Comparative genome analysis of Trichophyton rubrum and related dermatophytes reveals candidate genes involved in infection.</title>
        <authorList>
            <person name="Martinez D.A."/>
            <person name="Oliver B.G."/>
            <person name="Graeser Y."/>
            <person name="Goldberg J.M."/>
            <person name="Li W."/>
            <person name="Martinez-Rossi N.M."/>
            <person name="Monod M."/>
            <person name="Shelest E."/>
            <person name="Barton R.C."/>
            <person name="Birch E."/>
            <person name="Brakhage A.A."/>
            <person name="Chen Z."/>
            <person name="Gurr S.J."/>
            <person name="Heiman D."/>
            <person name="Heitman J."/>
            <person name="Kosti I."/>
            <person name="Rossi A."/>
            <person name="Saif S."/>
            <person name="Samalova M."/>
            <person name="Saunders C.W."/>
            <person name="Shea T."/>
            <person name="Summerbell R.C."/>
            <person name="Xu J."/>
            <person name="Young S."/>
            <person name="Zeng Q."/>
            <person name="Birren B.W."/>
            <person name="Cuomo C.A."/>
            <person name="White T.C."/>
        </authorList>
    </citation>
    <scope>NUCLEOTIDE SEQUENCE [LARGE SCALE GENOMIC DNA]</scope>
    <source>
        <strain>ATCC MYA-4605 / CBS 113480</strain>
    </source>
</reference>
<organism>
    <name type="scientific">Arthroderma otae (strain ATCC MYA-4605 / CBS 113480)</name>
    <name type="common">Microsporum canis</name>
    <dbReference type="NCBI Taxonomy" id="554155"/>
    <lineage>
        <taxon>Eukaryota</taxon>
        <taxon>Fungi</taxon>
        <taxon>Dikarya</taxon>
        <taxon>Ascomycota</taxon>
        <taxon>Pezizomycotina</taxon>
        <taxon>Eurotiomycetes</taxon>
        <taxon>Eurotiomycetidae</taxon>
        <taxon>Onygenales</taxon>
        <taxon>Arthrodermataceae</taxon>
        <taxon>Microsporum</taxon>
    </lineage>
</organism>
<accession>C5FEL7</accession>
<proteinExistence type="inferred from homology"/>